<organism>
    <name type="scientific">Rippkaea orientalis (strain PCC 8801 / RF-1)</name>
    <name type="common">Cyanothece sp. (strain PCC 8801)</name>
    <dbReference type="NCBI Taxonomy" id="41431"/>
    <lineage>
        <taxon>Bacteria</taxon>
        <taxon>Bacillati</taxon>
        <taxon>Cyanobacteriota</taxon>
        <taxon>Cyanophyceae</taxon>
        <taxon>Oscillatoriophycideae</taxon>
        <taxon>Chroococcales</taxon>
        <taxon>Aphanothecaceae</taxon>
        <taxon>Rippkaea</taxon>
        <taxon>Rippkaea orientalis</taxon>
    </lineage>
</organism>
<name>RL33_RIPO1</name>
<feature type="chain" id="PRO_1000119436" description="Large ribosomal subunit protein bL33">
    <location>
        <begin position="1"/>
        <end position="64"/>
    </location>
</feature>
<accession>B7JW32</accession>
<reference key="1">
    <citation type="journal article" date="2011" name="MBio">
        <title>Novel metabolic attributes of the genus Cyanothece, comprising a group of unicellular nitrogen-fixing Cyanobacteria.</title>
        <authorList>
            <person name="Bandyopadhyay A."/>
            <person name="Elvitigala T."/>
            <person name="Welsh E."/>
            <person name="Stockel J."/>
            <person name="Liberton M."/>
            <person name="Min H."/>
            <person name="Sherman L.A."/>
            <person name="Pakrasi H.B."/>
        </authorList>
    </citation>
    <scope>NUCLEOTIDE SEQUENCE [LARGE SCALE GENOMIC DNA]</scope>
    <source>
        <strain>PCC 8801 / RF-1</strain>
    </source>
</reference>
<sequence length="64" mass="7392">MAAKKGVRIIITLECTECRTNTDKRSPGVSRYTTSKNRRNTTGRMEIKKFCPHCNTHTIHKEIK</sequence>
<keyword id="KW-1185">Reference proteome</keyword>
<keyword id="KW-0687">Ribonucleoprotein</keyword>
<keyword id="KW-0689">Ribosomal protein</keyword>
<dbReference type="EMBL" id="CP001287">
    <property type="protein sequence ID" value="ACK65721.1"/>
    <property type="molecule type" value="Genomic_DNA"/>
</dbReference>
<dbReference type="RefSeq" id="WP_012594994.1">
    <property type="nucleotide sequence ID" value="NC_011726.1"/>
</dbReference>
<dbReference type="STRING" id="41431.PCC8801_1670"/>
<dbReference type="KEGG" id="cyp:PCC8801_1670"/>
<dbReference type="eggNOG" id="COG0267">
    <property type="taxonomic scope" value="Bacteria"/>
</dbReference>
<dbReference type="HOGENOM" id="CLU_190949_3_0_3"/>
<dbReference type="OrthoDB" id="9801333at2"/>
<dbReference type="Proteomes" id="UP000008204">
    <property type="component" value="Chromosome"/>
</dbReference>
<dbReference type="GO" id="GO:0005737">
    <property type="term" value="C:cytoplasm"/>
    <property type="evidence" value="ECO:0007669"/>
    <property type="project" value="UniProtKB-ARBA"/>
</dbReference>
<dbReference type="GO" id="GO:1990904">
    <property type="term" value="C:ribonucleoprotein complex"/>
    <property type="evidence" value="ECO:0007669"/>
    <property type="project" value="UniProtKB-KW"/>
</dbReference>
<dbReference type="GO" id="GO:0005840">
    <property type="term" value="C:ribosome"/>
    <property type="evidence" value="ECO:0007669"/>
    <property type="project" value="UniProtKB-KW"/>
</dbReference>
<dbReference type="GO" id="GO:0003735">
    <property type="term" value="F:structural constituent of ribosome"/>
    <property type="evidence" value="ECO:0007669"/>
    <property type="project" value="InterPro"/>
</dbReference>
<dbReference type="GO" id="GO:0006412">
    <property type="term" value="P:translation"/>
    <property type="evidence" value="ECO:0007669"/>
    <property type="project" value="UniProtKB-UniRule"/>
</dbReference>
<dbReference type="Gene3D" id="2.20.28.120">
    <property type="entry name" value="Ribosomal protein L33"/>
    <property type="match status" value="1"/>
</dbReference>
<dbReference type="HAMAP" id="MF_00294">
    <property type="entry name" value="Ribosomal_bL33"/>
    <property type="match status" value="1"/>
</dbReference>
<dbReference type="InterPro" id="IPR001705">
    <property type="entry name" value="Ribosomal_bL33"/>
</dbReference>
<dbReference type="InterPro" id="IPR018264">
    <property type="entry name" value="Ribosomal_bL33_CS"/>
</dbReference>
<dbReference type="InterPro" id="IPR038584">
    <property type="entry name" value="Ribosomal_bL33_sf"/>
</dbReference>
<dbReference type="InterPro" id="IPR011332">
    <property type="entry name" value="Ribosomal_zn-bd"/>
</dbReference>
<dbReference type="NCBIfam" id="NF001764">
    <property type="entry name" value="PRK00504.1"/>
    <property type="match status" value="1"/>
</dbReference>
<dbReference type="NCBIfam" id="NF001860">
    <property type="entry name" value="PRK00595.1"/>
    <property type="match status" value="1"/>
</dbReference>
<dbReference type="NCBIfam" id="TIGR01023">
    <property type="entry name" value="rpmG_bact"/>
    <property type="match status" value="1"/>
</dbReference>
<dbReference type="PANTHER" id="PTHR43168">
    <property type="entry name" value="50S RIBOSOMAL PROTEIN L33, CHLOROPLASTIC"/>
    <property type="match status" value="1"/>
</dbReference>
<dbReference type="PANTHER" id="PTHR43168:SF2">
    <property type="entry name" value="LARGE RIBOSOMAL SUBUNIT PROTEIN BL33C"/>
    <property type="match status" value="1"/>
</dbReference>
<dbReference type="Pfam" id="PF00471">
    <property type="entry name" value="Ribosomal_L33"/>
    <property type="match status" value="1"/>
</dbReference>
<dbReference type="SUPFAM" id="SSF57829">
    <property type="entry name" value="Zn-binding ribosomal proteins"/>
    <property type="match status" value="1"/>
</dbReference>
<dbReference type="PROSITE" id="PS00582">
    <property type="entry name" value="RIBOSOMAL_L33"/>
    <property type="match status" value="1"/>
</dbReference>
<comment type="similarity">
    <text evidence="1">Belongs to the bacterial ribosomal protein bL33 family.</text>
</comment>
<protein>
    <recommendedName>
        <fullName evidence="1">Large ribosomal subunit protein bL33</fullName>
    </recommendedName>
    <alternativeName>
        <fullName evidence="2">50S ribosomal protein L33</fullName>
    </alternativeName>
</protein>
<proteinExistence type="inferred from homology"/>
<evidence type="ECO:0000255" key="1">
    <source>
        <dbReference type="HAMAP-Rule" id="MF_00294"/>
    </source>
</evidence>
<evidence type="ECO:0000305" key="2"/>
<gene>
    <name evidence="1" type="primary">rpmG</name>
    <name evidence="1" type="synonym">rpl33</name>
    <name type="ordered locus">PCC8801_1670</name>
</gene>